<gene>
    <name type="primary">Rbp3</name>
</gene>
<reference key="1">
    <citation type="journal article" date="2002" name="Curr. Eye Res.">
        <title>Sequence analysis of the mouse IRBP gene and cDNA.</title>
        <authorList>
            <person name="Shuler R.K. Jr."/>
            <person name="Gross E."/>
            <person name="He W.-Y."/>
            <person name="Liou G.I."/>
            <person name="Nickerson J.M."/>
        </authorList>
    </citation>
    <scope>NUCLEOTIDE SEQUENCE [GENOMIC DNA]</scope>
    <source>
        <strain>129/Sv</strain>
    </source>
</reference>
<reference key="2">
    <citation type="journal article" date="2004" name="Genome Res.">
        <title>The status, quality, and expansion of the NIH full-length cDNA project: the Mammalian Gene Collection (MGC).</title>
        <authorList>
            <consortium name="The MGC Project Team"/>
        </authorList>
    </citation>
    <scope>NUCLEOTIDE SEQUENCE [LARGE SCALE MRNA]</scope>
    <source>
        <tissue>Eye</tissue>
    </source>
</reference>
<reference key="3">
    <citation type="submission" date="1999-04" db="EMBL/GenBank/DDBJ databases">
        <authorList>
            <person name="Si J.-S."/>
            <person name="Nickerson J.M."/>
        </authorList>
    </citation>
    <scope>NUCLEOTIDE SEQUENCE [GENOMIC DNA] OF 1-610</scope>
    <source>
        <strain>BALB/cJ</strain>
    </source>
</reference>
<reference key="4">
    <citation type="journal article" date="1992" name="Mol. Phylogenet. Evol.">
        <title>A molecular perspective on mammalian evolution from the gene encoding interphotoreceptor retinoid binding protein, with convincing evidence for bat monophyly.</title>
        <authorList>
            <person name="Stanhope M.J."/>
            <person name="Czelusniak J."/>
            <person name="Si J.-S."/>
            <person name="Nickerson J.M."/>
            <person name="Goodman M."/>
        </authorList>
    </citation>
    <scope>NUCLEOTIDE SEQUENCE [GENOMIC DNA] OF 42-454</scope>
    <scope>TISSUE SPECIFICITY</scope>
    <source>
        <strain>BALB/cJ</strain>
    </source>
</reference>
<reference key="5">
    <citation type="submission" date="1999-10" db="EMBL/GenBank/DDBJ databases">
        <authorList>
            <person name="Suzuki H."/>
            <person name="Serizawa K."/>
        </authorList>
    </citation>
    <scope>NUCLEOTIDE SEQUENCE [GENOMIC DNA] OF 71-454</scope>
    <source>
        <strain>MOA</strain>
    </source>
</reference>
<dbReference type="EMBL" id="AY682090">
    <property type="protein sequence ID" value="AAT81142.1"/>
    <property type="molecule type" value="Genomic_DNA"/>
</dbReference>
<dbReference type="EMBL" id="BC017610">
    <property type="protein sequence ID" value="AAH17610.1"/>
    <property type="molecule type" value="mRNA"/>
</dbReference>
<dbReference type="EMBL" id="BC042480">
    <property type="protein sequence ID" value="AAH42480.1"/>
    <property type="molecule type" value="mRNA"/>
</dbReference>
<dbReference type="EMBL" id="BC083133">
    <property type="protein sequence ID" value="AAH83133.1"/>
    <property type="molecule type" value="mRNA"/>
</dbReference>
<dbReference type="EMBL" id="AF126968">
    <property type="protein sequence ID" value="AAA39331.2"/>
    <property type="molecule type" value="Genomic_DNA"/>
</dbReference>
<dbReference type="EMBL" id="AB033711">
    <property type="protein sequence ID" value="BAA85872.1"/>
    <property type="molecule type" value="Genomic_DNA"/>
</dbReference>
<dbReference type="CCDS" id="CCDS26929.1"/>
<dbReference type="RefSeq" id="NP_056560.1">
    <property type="nucleotide sequence ID" value="NM_015745.2"/>
</dbReference>
<dbReference type="SMR" id="P49194"/>
<dbReference type="BioGRID" id="202829">
    <property type="interactions" value="2"/>
</dbReference>
<dbReference type="FunCoup" id="P49194">
    <property type="interactions" value="125"/>
</dbReference>
<dbReference type="STRING" id="10090.ENSMUSP00000040249"/>
<dbReference type="MEROPS" id="S41.952"/>
<dbReference type="MEROPS" id="S41.953"/>
<dbReference type="GlyCosmos" id="P49194">
    <property type="glycosylation" value="3 sites, No reported glycans"/>
</dbReference>
<dbReference type="GlyGen" id="P49194">
    <property type="glycosylation" value="6 sites, 1 N-linked glycan (1 site), 1 O-linked glycan (1 site)"/>
</dbReference>
<dbReference type="iPTMnet" id="P49194"/>
<dbReference type="PhosphoSitePlus" id="P49194"/>
<dbReference type="PaxDb" id="10090-ENSMUSP00000040249"/>
<dbReference type="ProteomicsDB" id="255288"/>
<dbReference type="DNASU" id="19661"/>
<dbReference type="GeneID" id="19661"/>
<dbReference type="KEGG" id="mmu:19661"/>
<dbReference type="UCSC" id="uc007tad.1">
    <property type="organism name" value="mouse"/>
</dbReference>
<dbReference type="AGR" id="MGI:97878"/>
<dbReference type="CTD" id="5949"/>
<dbReference type="MGI" id="MGI:97878">
    <property type="gene designation" value="Rbp3"/>
</dbReference>
<dbReference type="eggNOG" id="ENOG502QW81">
    <property type="taxonomic scope" value="Eukaryota"/>
</dbReference>
<dbReference type="InParanoid" id="P49194"/>
<dbReference type="OrthoDB" id="10268064at2759"/>
<dbReference type="PhylomeDB" id="P49194"/>
<dbReference type="TreeFam" id="TF332253"/>
<dbReference type="Reactome" id="R-MMU-2187335">
    <property type="pathway name" value="The retinoid cycle in cones (daylight vision)"/>
</dbReference>
<dbReference type="Reactome" id="R-MMU-2453902">
    <property type="pathway name" value="The canonical retinoid cycle in rods (twilight vision)"/>
</dbReference>
<dbReference type="BioGRID-ORCS" id="19661">
    <property type="hits" value="4 hits in 82 CRISPR screens"/>
</dbReference>
<dbReference type="ChiTaRS" id="Rbp3">
    <property type="organism name" value="mouse"/>
</dbReference>
<dbReference type="PRO" id="PR:P49194"/>
<dbReference type="Proteomes" id="UP000000589">
    <property type="component" value="Unplaced"/>
</dbReference>
<dbReference type="RNAct" id="P49194">
    <property type="molecule type" value="protein"/>
</dbReference>
<dbReference type="GO" id="GO:0005576">
    <property type="term" value="C:extracellular region"/>
    <property type="evidence" value="ECO:0007669"/>
    <property type="project" value="UniProtKB-KW"/>
</dbReference>
<dbReference type="GO" id="GO:0033165">
    <property type="term" value="C:interphotoreceptor matrix"/>
    <property type="evidence" value="ECO:0007669"/>
    <property type="project" value="UniProtKB-SubCell"/>
</dbReference>
<dbReference type="GO" id="GO:0016918">
    <property type="term" value="F:retinal binding"/>
    <property type="evidence" value="ECO:0007669"/>
    <property type="project" value="UniProtKB-KW"/>
</dbReference>
<dbReference type="GO" id="GO:0008236">
    <property type="term" value="F:serine-type peptidase activity"/>
    <property type="evidence" value="ECO:0007669"/>
    <property type="project" value="InterPro"/>
</dbReference>
<dbReference type="GO" id="GO:0006508">
    <property type="term" value="P:proteolysis"/>
    <property type="evidence" value="ECO:0007669"/>
    <property type="project" value="InterPro"/>
</dbReference>
<dbReference type="CDD" id="cd07563">
    <property type="entry name" value="Peptidase_S41_IRBP"/>
    <property type="match status" value="4"/>
</dbReference>
<dbReference type="FunFam" id="3.90.226.10:FF:000031">
    <property type="entry name" value="Interphotoreceptor retinoid binding protein"/>
    <property type="match status" value="1"/>
</dbReference>
<dbReference type="FunFam" id="3.30.750.44:FF:000009">
    <property type="entry name" value="Retinol-binding protein 3"/>
    <property type="match status" value="1"/>
</dbReference>
<dbReference type="FunFam" id="3.90.226.10:FF:000037">
    <property type="entry name" value="Retinol-binding protein 3"/>
    <property type="match status" value="1"/>
</dbReference>
<dbReference type="FunFam" id="3.90.226.10:FF:000038">
    <property type="entry name" value="Retinol-binding protein 3"/>
    <property type="match status" value="1"/>
</dbReference>
<dbReference type="Gene3D" id="3.30.750.44">
    <property type="match status" value="4"/>
</dbReference>
<dbReference type="Gene3D" id="3.90.226.10">
    <property type="entry name" value="2-enoyl-CoA Hydratase, Chain A, domain 1"/>
    <property type="match status" value="4"/>
</dbReference>
<dbReference type="InterPro" id="IPR029045">
    <property type="entry name" value="ClpP/crotonase-like_dom_sf"/>
</dbReference>
<dbReference type="InterPro" id="IPR005151">
    <property type="entry name" value="Tail-specific_protease"/>
</dbReference>
<dbReference type="PANTHER" id="PTHR11261">
    <property type="entry name" value="INTERPHOTORECEPTOR RETINOID-BINDING PROTEIN"/>
    <property type="match status" value="1"/>
</dbReference>
<dbReference type="PANTHER" id="PTHR11261:SF3">
    <property type="entry name" value="RETINOL-BINDING PROTEIN 3"/>
    <property type="match status" value="1"/>
</dbReference>
<dbReference type="Pfam" id="PF03572">
    <property type="entry name" value="Peptidase_S41"/>
    <property type="match status" value="4"/>
</dbReference>
<dbReference type="Pfam" id="PF11918">
    <property type="entry name" value="Peptidase_S41_N"/>
    <property type="match status" value="4"/>
</dbReference>
<dbReference type="SMART" id="SM00245">
    <property type="entry name" value="TSPc"/>
    <property type="match status" value="4"/>
</dbReference>
<dbReference type="SUPFAM" id="SSF52096">
    <property type="entry name" value="ClpP/crotonase"/>
    <property type="match status" value="4"/>
</dbReference>
<evidence type="ECO:0000255" key="1"/>
<evidence type="ECO:0000256" key="2">
    <source>
        <dbReference type="SAM" id="MobiDB-lite"/>
    </source>
</evidence>
<evidence type="ECO:0000269" key="3">
    <source>
    </source>
</evidence>
<evidence type="ECO:0000305" key="4"/>
<organism>
    <name type="scientific">Mus musculus</name>
    <name type="common">Mouse</name>
    <dbReference type="NCBI Taxonomy" id="10090"/>
    <lineage>
        <taxon>Eukaryota</taxon>
        <taxon>Metazoa</taxon>
        <taxon>Chordata</taxon>
        <taxon>Craniata</taxon>
        <taxon>Vertebrata</taxon>
        <taxon>Euteleostomi</taxon>
        <taxon>Mammalia</taxon>
        <taxon>Eutheria</taxon>
        <taxon>Euarchontoglires</taxon>
        <taxon>Glires</taxon>
        <taxon>Rodentia</taxon>
        <taxon>Myomorpha</taxon>
        <taxon>Muroidea</taxon>
        <taxon>Muridae</taxon>
        <taxon>Murinae</taxon>
        <taxon>Mus</taxon>
        <taxon>Mus</taxon>
    </lineage>
</organism>
<proteinExistence type="evidence at transcript level"/>
<keyword id="KW-0272">Extracellular matrix</keyword>
<keyword id="KW-0325">Glycoprotein</keyword>
<keyword id="KW-1185">Reference proteome</keyword>
<keyword id="KW-0677">Repeat</keyword>
<keyword id="KW-0964">Secreted</keyword>
<keyword id="KW-0732">Signal</keyword>
<keyword id="KW-0813">Transport</keyword>
<keyword id="KW-0845">Vitamin A</keyword>
<accession>P49194</accession>
<accession>Q6B4R6</accession>
<accession>Q8VD34</accession>
<accession>Q9R0H8</accession>
<comment type="function">
    <text>IRBP shuttles 11-cis and all trans retinoids between the retinol isomerase in the pigment epithelium and the visual pigments in the photoreceptor cells of the retina.</text>
</comment>
<comment type="subcellular location">
    <subcellularLocation>
        <location>Secreted</location>
        <location>Extracellular space</location>
        <location>Extracellular matrix</location>
        <location>Interphotoreceptor matrix</location>
    </subcellularLocation>
    <text>Interphotoreceptor matrix that permeates the space between the retina and the contiguous layer of pigment epithelium cells.</text>
</comment>
<comment type="tissue specificity">
    <text evidence="3">Expressed in the photosensitive tissues; retina and pineal gland.</text>
</comment>
<comment type="similarity">
    <text evidence="4">Belongs to the peptidase S41A family.</text>
</comment>
<sequence length="1234" mass="134451">MMREWVLVLSTLLWVPAGPTHLFQPSLVLDMAKILLDNYCFPENLMGMQAAIEQAMKSHEILGISDPQTLAQVLTAGVQSSLSDPRLFISYEPSTLEAPQQAPVLTNLTREELLAQIQRNIRHEVLEGNVGYLRVDDLPGQEVLSELGEFLVSHVWRQLMGTSSLVLDLRHCSGGHFSGIPYVISYLHPGNTVMHVDTVYDRPSNTTTEIWTLPEVLGERYSADKDVVVLTSGHTGGVAEDIAYILKQMRRAIVVGERTEGGALDLQKLRIGQSNFFLTVPVSRSLGPLGGGGQTWEGSGVLPCVGTPAEQALEKALAILTLRRALPGVVLRLQEALQDYYTLVDRVPGLLHHLASMDYSAVVSEEDLVTKLNAGLQAVSEDPRLLVRATGPRDSSSRPETGPNESPAATPEVPTEEDARRALVDSVFQVSVLPGNVGYLRFDRFADAAVLETLGPYVLKQVWEPLQDTEHLIMDLRHNPGGPSSAMPLVLSYFQGPEAGPVRLFTTYDRRTNITQEHFSHRELLGQRYGNQRGVYLLTSHRTATAAEEFAFLMQSLGWATLVGEITAGSLLHTCTVPLLDSPQGGLALTVPVLTFIDNHGEAWLGGGVVPDAIVLAEEALERAQEVLDFHRSLGALVEGTGRLLEAHYARPEIAQRARALLQSKLAQGAYRTAVDLESLASQLTADLQEVSEDHRLLVFHSPGELVAEEVPLPPPAVPSPEELSYLIEALFKTDVLPGQLGYLRFDAMAELETVKAIGPQLVQLVWQRLVDTAALIVDLRYNPGSYSSAVPLLCSYFFEAEPRQHLYSVFDRATSRVTEIWTLPLVAGQRYGSHKDLYILMSHTSGSAAEAFAHTMQDLQRATVIGEPTAGGALSVGIYQVGNSPLYASMPTQMALSASTGEAWDLAGVEPDITVPMSEALSTAQDIVVLRAKVPTVLQTAGKLVADNYASPELGAKMAAKLSGLQSRYARVTSEGALAEMLGADLQILSGDPHLKTAHIPEDAKDRIPGIVPMQIPSPEVFEDLIKFSFHTNVLEDNIGYLRFDMFGDCELLTQVSELLVEHIWKKIVHTDALIIDMRFNLGGPTSSISALCSYFFDEAPPILLDKIYNRPNDSVSELWTHTQLTGERYGSKKSVAILTSGVTAGAAEEFTYIMKRLGRALVIGEVTSGGCQPPQTYHVDDTHLYITIPTARSVGAEDGSSWEGVGVTPNVVVSSELALTRAKEILQQALRG</sequence>
<name>RET3_MOUSE</name>
<feature type="signal peptide" evidence="1">
    <location>
        <begin position="1"/>
        <end position="17"/>
    </location>
</feature>
<feature type="chain" id="PRO_0000021524" description="Retinol-binding protein 3">
    <location>
        <begin position="18"/>
        <end position="1234"/>
    </location>
</feature>
<feature type="repeat" description="1">
    <location>
        <begin position="18"/>
        <end position="320"/>
    </location>
</feature>
<feature type="repeat" description="2">
    <location>
        <begin position="321"/>
        <end position="628"/>
    </location>
</feature>
<feature type="repeat" description="3">
    <location>
        <begin position="629"/>
        <end position="929"/>
    </location>
</feature>
<feature type="repeat" description="4">
    <location>
        <begin position="930"/>
        <end position="1228"/>
    </location>
</feature>
<feature type="region of interest" description="4 X approximate tandem repeats">
    <location>
        <begin position="18"/>
        <end position="1228"/>
    </location>
</feature>
<feature type="region of interest" description="Disordered" evidence="2">
    <location>
        <begin position="383"/>
        <end position="417"/>
    </location>
</feature>
<feature type="glycosylation site" description="N-linked (GlcNAc...) asparagine" evidence="1">
    <location>
        <position position="107"/>
    </location>
</feature>
<feature type="glycosylation site" description="N-linked (GlcNAc...) asparagine" evidence="1">
    <location>
        <position position="205"/>
    </location>
</feature>
<feature type="glycosylation site" description="N-linked (GlcNAc...) asparagine" evidence="1">
    <location>
        <position position="513"/>
    </location>
</feature>
<feature type="sequence conflict" description="In Ref. 2 and 3." evidence="4" ref="2 3">
    <original>G</original>
    <variation>S</variation>
    <location>
        <position position="161"/>
    </location>
</feature>
<feature type="sequence conflict" description="In Ref. 1; AAT81142." evidence="4" ref="1">
    <original>LVDT</original>
    <variation>AGGQ</variation>
    <location>
        <begin position="770"/>
        <end position="773"/>
    </location>
</feature>
<feature type="sequence conflict" description="In Ref. 1; AAT81142." evidence="4" ref="1">
    <original>V</original>
    <variation>A</variation>
    <location>
        <position position="930"/>
    </location>
</feature>
<protein>
    <recommendedName>
        <fullName>Retinol-binding protein 3</fullName>
    </recommendedName>
    <alternativeName>
        <fullName>Interphotoreceptor retinoid-binding protein</fullName>
        <shortName>IRBP</shortName>
    </alternativeName>
    <alternativeName>
        <fullName>Interstitial retinol-binding protein</fullName>
    </alternativeName>
</protein>